<reference key="1">
    <citation type="journal article" date="2008" name="BMC Genomics">
        <title>Complete genome of Phenylobacterium zucineum - a novel facultative intracellular bacterium isolated from human erythroleukemia cell line K562.</title>
        <authorList>
            <person name="Luo Y."/>
            <person name="Xu X."/>
            <person name="Ding Z."/>
            <person name="Liu Z."/>
            <person name="Zhang B."/>
            <person name="Yan Z."/>
            <person name="Sun J."/>
            <person name="Hu S."/>
            <person name="Hu X."/>
        </authorList>
    </citation>
    <scope>NUCLEOTIDE SEQUENCE [LARGE SCALE GENOMIC DNA]</scope>
    <source>
        <strain>HLK1</strain>
    </source>
</reference>
<evidence type="ECO:0000255" key="1">
    <source>
        <dbReference type="HAMAP-Rule" id="MF_00294"/>
    </source>
</evidence>
<evidence type="ECO:0000305" key="2"/>
<proteinExistence type="inferred from homology"/>
<accession>B4R955</accession>
<keyword id="KW-1185">Reference proteome</keyword>
<keyword id="KW-0687">Ribonucleoprotein</keyword>
<keyword id="KW-0689">Ribosomal protein</keyword>
<organism>
    <name type="scientific">Phenylobacterium zucineum (strain HLK1)</name>
    <dbReference type="NCBI Taxonomy" id="450851"/>
    <lineage>
        <taxon>Bacteria</taxon>
        <taxon>Pseudomonadati</taxon>
        <taxon>Pseudomonadota</taxon>
        <taxon>Alphaproteobacteria</taxon>
        <taxon>Caulobacterales</taxon>
        <taxon>Caulobacteraceae</taxon>
        <taxon>Phenylobacterium</taxon>
    </lineage>
</organism>
<name>RL33_PHEZH</name>
<sequence>MAKPASIKIRLNSTADTGFFYVTKKNARTKTDKMVLKKYDPIVRKHVEFKEGKIK</sequence>
<comment type="similarity">
    <text evidence="1">Belongs to the bacterial ribosomal protein bL33 family.</text>
</comment>
<gene>
    <name evidence="1" type="primary">rpmG</name>
    <name type="ordered locus">PHZ_c1311</name>
</gene>
<feature type="chain" id="PRO_0000356608" description="Large ribosomal subunit protein bL33">
    <location>
        <begin position="1"/>
        <end position="55"/>
    </location>
</feature>
<dbReference type="EMBL" id="CP000747">
    <property type="protein sequence ID" value="ACG77725.1"/>
    <property type="molecule type" value="Genomic_DNA"/>
</dbReference>
<dbReference type="RefSeq" id="WP_012521869.1">
    <property type="nucleotide sequence ID" value="NC_011144.1"/>
</dbReference>
<dbReference type="SMR" id="B4R955"/>
<dbReference type="STRING" id="450851.PHZ_c1311"/>
<dbReference type="KEGG" id="pzu:PHZ_c1311"/>
<dbReference type="eggNOG" id="COG0267">
    <property type="taxonomic scope" value="Bacteria"/>
</dbReference>
<dbReference type="HOGENOM" id="CLU_190949_1_1_5"/>
<dbReference type="OrthoDB" id="21586at2"/>
<dbReference type="Proteomes" id="UP000001868">
    <property type="component" value="Chromosome"/>
</dbReference>
<dbReference type="GO" id="GO:0022625">
    <property type="term" value="C:cytosolic large ribosomal subunit"/>
    <property type="evidence" value="ECO:0007669"/>
    <property type="project" value="TreeGrafter"/>
</dbReference>
<dbReference type="GO" id="GO:0003735">
    <property type="term" value="F:structural constituent of ribosome"/>
    <property type="evidence" value="ECO:0007669"/>
    <property type="project" value="InterPro"/>
</dbReference>
<dbReference type="GO" id="GO:0006412">
    <property type="term" value="P:translation"/>
    <property type="evidence" value="ECO:0007669"/>
    <property type="project" value="UniProtKB-UniRule"/>
</dbReference>
<dbReference type="Gene3D" id="2.20.28.120">
    <property type="entry name" value="Ribosomal protein L33"/>
    <property type="match status" value="1"/>
</dbReference>
<dbReference type="HAMAP" id="MF_00294">
    <property type="entry name" value="Ribosomal_bL33"/>
    <property type="match status" value="1"/>
</dbReference>
<dbReference type="InterPro" id="IPR001705">
    <property type="entry name" value="Ribosomal_bL33"/>
</dbReference>
<dbReference type="InterPro" id="IPR018264">
    <property type="entry name" value="Ribosomal_bL33_CS"/>
</dbReference>
<dbReference type="InterPro" id="IPR038584">
    <property type="entry name" value="Ribosomal_bL33_sf"/>
</dbReference>
<dbReference type="InterPro" id="IPR011332">
    <property type="entry name" value="Ribosomal_zn-bd"/>
</dbReference>
<dbReference type="NCBIfam" id="NF001860">
    <property type="entry name" value="PRK00595.1"/>
    <property type="match status" value="1"/>
</dbReference>
<dbReference type="NCBIfam" id="TIGR01023">
    <property type="entry name" value="rpmG_bact"/>
    <property type="match status" value="1"/>
</dbReference>
<dbReference type="PANTHER" id="PTHR15238">
    <property type="entry name" value="54S RIBOSOMAL PROTEIN L39, MITOCHONDRIAL"/>
    <property type="match status" value="1"/>
</dbReference>
<dbReference type="PANTHER" id="PTHR15238:SF1">
    <property type="entry name" value="LARGE RIBOSOMAL SUBUNIT PROTEIN BL33M"/>
    <property type="match status" value="1"/>
</dbReference>
<dbReference type="Pfam" id="PF00471">
    <property type="entry name" value="Ribosomal_L33"/>
    <property type="match status" value="1"/>
</dbReference>
<dbReference type="SUPFAM" id="SSF57829">
    <property type="entry name" value="Zn-binding ribosomal proteins"/>
    <property type="match status" value="1"/>
</dbReference>
<dbReference type="PROSITE" id="PS00582">
    <property type="entry name" value="RIBOSOMAL_L33"/>
    <property type="match status" value="1"/>
</dbReference>
<protein>
    <recommendedName>
        <fullName evidence="1">Large ribosomal subunit protein bL33</fullName>
    </recommendedName>
    <alternativeName>
        <fullName evidence="2">50S ribosomal protein L33</fullName>
    </alternativeName>
</protein>